<gene>
    <name evidence="1" type="primary">dapA</name>
    <name type="ordered locus">Cphamn1_0593</name>
</gene>
<feature type="chain" id="PRO_1000124023" description="4-hydroxy-tetrahydrodipicolinate synthase">
    <location>
        <begin position="1"/>
        <end position="297"/>
    </location>
</feature>
<feature type="active site" description="Proton donor/acceptor" evidence="1">
    <location>
        <position position="137"/>
    </location>
</feature>
<feature type="active site" description="Schiff-base intermediate with substrate" evidence="1">
    <location>
        <position position="166"/>
    </location>
</feature>
<feature type="binding site" evidence="1">
    <location>
        <position position="49"/>
    </location>
    <ligand>
        <name>pyruvate</name>
        <dbReference type="ChEBI" id="CHEBI:15361"/>
    </ligand>
</feature>
<feature type="binding site" evidence="1">
    <location>
        <position position="208"/>
    </location>
    <ligand>
        <name>pyruvate</name>
        <dbReference type="ChEBI" id="CHEBI:15361"/>
    </ligand>
</feature>
<feature type="site" description="Part of a proton relay during catalysis" evidence="1">
    <location>
        <position position="48"/>
    </location>
</feature>
<feature type="site" description="Part of a proton relay during catalysis" evidence="1">
    <location>
        <position position="111"/>
    </location>
</feature>
<organism>
    <name type="scientific">Chlorobium phaeobacteroides (strain BS1)</name>
    <dbReference type="NCBI Taxonomy" id="331678"/>
    <lineage>
        <taxon>Bacteria</taxon>
        <taxon>Pseudomonadati</taxon>
        <taxon>Chlorobiota</taxon>
        <taxon>Chlorobiia</taxon>
        <taxon>Chlorobiales</taxon>
        <taxon>Chlorobiaceae</taxon>
        <taxon>Chlorobium/Pelodictyon group</taxon>
        <taxon>Chlorobium</taxon>
    </lineage>
</organism>
<proteinExistence type="inferred from homology"/>
<evidence type="ECO:0000255" key="1">
    <source>
        <dbReference type="HAMAP-Rule" id="MF_00418"/>
    </source>
</evidence>
<evidence type="ECO:0000305" key="2"/>
<name>DAPA_CHLPB</name>
<accession>B3EMS4</accession>
<keyword id="KW-0028">Amino-acid biosynthesis</keyword>
<keyword id="KW-0963">Cytoplasm</keyword>
<keyword id="KW-0220">Diaminopimelate biosynthesis</keyword>
<keyword id="KW-0456">Lyase</keyword>
<keyword id="KW-0457">Lysine biosynthesis</keyword>
<keyword id="KW-0704">Schiff base</keyword>
<protein>
    <recommendedName>
        <fullName evidence="1">4-hydroxy-tetrahydrodipicolinate synthase</fullName>
        <shortName evidence="1">HTPA synthase</shortName>
        <ecNumber evidence="1">4.3.3.7</ecNumber>
    </recommendedName>
</protein>
<reference key="1">
    <citation type="submission" date="2008-06" db="EMBL/GenBank/DDBJ databases">
        <title>Complete sequence of Chlorobium phaeobacteroides BS1.</title>
        <authorList>
            <consortium name="US DOE Joint Genome Institute"/>
            <person name="Lucas S."/>
            <person name="Copeland A."/>
            <person name="Lapidus A."/>
            <person name="Glavina del Rio T."/>
            <person name="Dalin E."/>
            <person name="Tice H."/>
            <person name="Bruce D."/>
            <person name="Goodwin L."/>
            <person name="Pitluck S."/>
            <person name="Schmutz J."/>
            <person name="Larimer F."/>
            <person name="Land M."/>
            <person name="Hauser L."/>
            <person name="Kyrpides N."/>
            <person name="Ovchinnikova G."/>
            <person name="Li T."/>
            <person name="Liu Z."/>
            <person name="Zhao F."/>
            <person name="Overmann J."/>
            <person name="Bryant D.A."/>
            <person name="Richardson P."/>
        </authorList>
    </citation>
    <scope>NUCLEOTIDE SEQUENCE [LARGE SCALE GENOMIC DNA]</scope>
    <source>
        <strain>BS1</strain>
    </source>
</reference>
<sequence length="297" mass="32392">MSKRKLSGSAVALVTPFRQDMSVDREAIRRLVHFHIAAGTDILIPCGTTGESPTLTADEQTEIIEIVREEAGNKMLVAAGAGTNATEEAVSLASNAQKAGAQALLSVAPYYNKPSQEGYYQHYRRIAEAVSIPVIVYNVPGRTGSNVHAETILRLAHDCENIAAVKEASDNMAQIMELLASRPDDFSVMTGEDSLILPFMALGGDGVISVAANLLPAEVKQLVTEMHEGDLEKARVIHNRLRRLFSLNFIESNPVPVKYSLSLMGMIEEVYRLPLVALQPENKEKIKEELRNLGLVS</sequence>
<dbReference type="EC" id="4.3.3.7" evidence="1"/>
<dbReference type="EMBL" id="CP001101">
    <property type="protein sequence ID" value="ACE03552.1"/>
    <property type="molecule type" value="Genomic_DNA"/>
</dbReference>
<dbReference type="SMR" id="B3EMS4"/>
<dbReference type="STRING" id="331678.Cphamn1_0593"/>
<dbReference type="KEGG" id="cpb:Cphamn1_0593"/>
<dbReference type="eggNOG" id="COG0329">
    <property type="taxonomic scope" value="Bacteria"/>
</dbReference>
<dbReference type="HOGENOM" id="CLU_049343_7_0_10"/>
<dbReference type="OrthoDB" id="9782828at2"/>
<dbReference type="UniPathway" id="UPA00034">
    <property type="reaction ID" value="UER00017"/>
</dbReference>
<dbReference type="GO" id="GO:0005829">
    <property type="term" value="C:cytosol"/>
    <property type="evidence" value="ECO:0007669"/>
    <property type="project" value="TreeGrafter"/>
</dbReference>
<dbReference type="GO" id="GO:0008840">
    <property type="term" value="F:4-hydroxy-tetrahydrodipicolinate synthase activity"/>
    <property type="evidence" value="ECO:0007669"/>
    <property type="project" value="UniProtKB-UniRule"/>
</dbReference>
<dbReference type="GO" id="GO:0019877">
    <property type="term" value="P:diaminopimelate biosynthetic process"/>
    <property type="evidence" value="ECO:0007669"/>
    <property type="project" value="UniProtKB-UniRule"/>
</dbReference>
<dbReference type="GO" id="GO:0009089">
    <property type="term" value="P:lysine biosynthetic process via diaminopimelate"/>
    <property type="evidence" value="ECO:0007669"/>
    <property type="project" value="UniProtKB-UniRule"/>
</dbReference>
<dbReference type="CDD" id="cd00950">
    <property type="entry name" value="DHDPS"/>
    <property type="match status" value="1"/>
</dbReference>
<dbReference type="Gene3D" id="3.20.20.70">
    <property type="entry name" value="Aldolase class I"/>
    <property type="match status" value="1"/>
</dbReference>
<dbReference type="HAMAP" id="MF_00418">
    <property type="entry name" value="DapA"/>
    <property type="match status" value="1"/>
</dbReference>
<dbReference type="InterPro" id="IPR013785">
    <property type="entry name" value="Aldolase_TIM"/>
</dbReference>
<dbReference type="InterPro" id="IPR005263">
    <property type="entry name" value="DapA"/>
</dbReference>
<dbReference type="InterPro" id="IPR002220">
    <property type="entry name" value="DapA-like"/>
</dbReference>
<dbReference type="InterPro" id="IPR020625">
    <property type="entry name" value="Schiff_base-form_aldolases_AS"/>
</dbReference>
<dbReference type="NCBIfam" id="TIGR00674">
    <property type="entry name" value="dapA"/>
    <property type="match status" value="1"/>
</dbReference>
<dbReference type="PANTHER" id="PTHR12128:SF66">
    <property type="entry name" value="4-HYDROXY-2-OXOGLUTARATE ALDOLASE, MITOCHONDRIAL"/>
    <property type="match status" value="1"/>
</dbReference>
<dbReference type="PANTHER" id="PTHR12128">
    <property type="entry name" value="DIHYDRODIPICOLINATE SYNTHASE"/>
    <property type="match status" value="1"/>
</dbReference>
<dbReference type="Pfam" id="PF00701">
    <property type="entry name" value="DHDPS"/>
    <property type="match status" value="1"/>
</dbReference>
<dbReference type="PIRSF" id="PIRSF001365">
    <property type="entry name" value="DHDPS"/>
    <property type="match status" value="1"/>
</dbReference>
<dbReference type="PRINTS" id="PR00146">
    <property type="entry name" value="DHPICSNTHASE"/>
</dbReference>
<dbReference type="SMART" id="SM01130">
    <property type="entry name" value="DHDPS"/>
    <property type="match status" value="1"/>
</dbReference>
<dbReference type="SUPFAM" id="SSF51569">
    <property type="entry name" value="Aldolase"/>
    <property type="match status" value="1"/>
</dbReference>
<dbReference type="PROSITE" id="PS00666">
    <property type="entry name" value="DHDPS_2"/>
    <property type="match status" value="1"/>
</dbReference>
<comment type="function">
    <text evidence="1">Catalyzes the condensation of (S)-aspartate-beta-semialdehyde [(S)-ASA] and pyruvate to 4-hydroxy-tetrahydrodipicolinate (HTPA).</text>
</comment>
<comment type="catalytic activity">
    <reaction evidence="1">
        <text>L-aspartate 4-semialdehyde + pyruvate = (2S,4S)-4-hydroxy-2,3,4,5-tetrahydrodipicolinate + H2O + H(+)</text>
        <dbReference type="Rhea" id="RHEA:34171"/>
        <dbReference type="ChEBI" id="CHEBI:15361"/>
        <dbReference type="ChEBI" id="CHEBI:15377"/>
        <dbReference type="ChEBI" id="CHEBI:15378"/>
        <dbReference type="ChEBI" id="CHEBI:67139"/>
        <dbReference type="ChEBI" id="CHEBI:537519"/>
        <dbReference type="EC" id="4.3.3.7"/>
    </reaction>
</comment>
<comment type="pathway">
    <text evidence="1">Amino-acid biosynthesis; L-lysine biosynthesis via DAP pathway; (S)-tetrahydrodipicolinate from L-aspartate: step 3/4.</text>
</comment>
<comment type="subunit">
    <text evidence="1">Homotetramer; dimer of dimers.</text>
</comment>
<comment type="subcellular location">
    <subcellularLocation>
        <location evidence="1">Cytoplasm</location>
    </subcellularLocation>
</comment>
<comment type="similarity">
    <text evidence="1">Belongs to the DapA family.</text>
</comment>
<comment type="caution">
    <text evidence="2">Was originally thought to be a dihydrodipicolinate synthase (DHDPS), catalyzing the condensation of (S)-aspartate-beta-semialdehyde [(S)-ASA] and pyruvate to dihydrodipicolinate (DHDP). However, it was shown in E.coli that the product of the enzymatic reaction is not dihydrodipicolinate but in fact (4S)-4-hydroxy-2,3,4,5-tetrahydro-(2S)-dipicolinic acid (HTPA), and that the consecutive dehydration reaction leading to DHDP is not spontaneous but catalyzed by DapB.</text>
</comment>